<organism>
    <name type="scientific">Anaeromyxobacter dehalogenans (strain 2CP-C)</name>
    <dbReference type="NCBI Taxonomy" id="290397"/>
    <lineage>
        <taxon>Bacteria</taxon>
        <taxon>Pseudomonadati</taxon>
        <taxon>Myxococcota</taxon>
        <taxon>Myxococcia</taxon>
        <taxon>Myxococcales</taxon>
        <taxon>Cystobacterineae</taxon>
        <taxon>Anaeromyxobacteraceae</taxon>
        <taxon>Anaeromyxobacter</taxon>
    </lineage>
</organism>
<evidence type="ECO:0000255" key="1">
    <source>
        <dbReference type="HAMAP-Rule" id="MF_01522"/>
    </source>
</evidence>
<evidence type="ECO:0000256" key="2">
    <source>
        <dbReference type="SAM" id="MobiDB-lite"/>
    </source>
</evidence>
<accession>Q2IPI8</accession>
<name>KUP_ANADE</name>
<dbReference type="EMBL" id="CP000251">
    <property type="protein sequence ID" value="ABC80724.1"/>
    <property type="molecule type" value="Genomic_DNA"/>
</dbReference>
<dbReference type="RefSeq" id="WP_011420007.1">
    <property type="nucleotide sequence ID" value="NC_007760.1"/>
</dbReference>
<dbReference type="STRING" id="290397.Adeh_0949"/>
<dbReference type="KEGG" id="ade:Adeh_0949"/>
<dbReference type="eggNOG" id="COG3158">
    <property type="taxonomic scope" value="Bacteria"/>
</dbReference>
<dbReference type="HOGENOM" id="CLU_008142_4_2_7"/>
<dbReference type="OrthoDB" id="9805577at2"/>
<dbReference type="Proteomes" id="UP000001935">
    <property type="component" value="Chromosome"/>
</dbReference>
<dbReference type="GO" id="GO:0005886">
    <property type="term" value="C:plasma membrane"/>
    <property type="evidence" value="ECO:0007669"/>
    <property type="project" value="UniProtKB-SubCell"/>
</dbReference>
<dbReference type="GO" id="GO:0015079">
    <property type="term" value="F:potassium ion transmembrane transporter activity"/>
    <property type="evidence" value="ECO:0007669"/>
    <property type="project" value="UniProtKB-UniRule"/>
</dbReference>
<dbReference type="GO" id="GO:0015293">
    <property type="term" value="F:symporter activity"/>
    <property type="evidence" value="ECO:0007669"/>
    <property type="project" value="UniProtKB-UniRule"/>
</dbReference>
<dbReference type="HAMAP" id="MF_01522">
    <property type="entry name" value="Kup"/>
    <property type="match status" value="1"/>
</dbReference>
<dbReference type="InterPro" id="IPR003855">
    <property type="entry name" value="K+_transporter"/>
</dbReference>
<dbReference type="InterPro" id="IPR053952">
    <property type="entry name" value="K_trans_C"/>
</dbReference>
<dbReference type="InterPro" id="IPR053951">
    <property type="entry name" value="K_trans_N"/>
</dbReference>
<dbReference type="InterPro" id="IPR023051">
    <property type="entry name" value="Kup"/>
</dbReference>
<dbReference type="PANTHER" id="PTHR30540:SF79">
    <property type="entry name" value="LOW AFFINITY POTASSIUM TRANSPORT SYSTEM PROTEIN KUP"/>
    <property type="match status" value="1"/>
</dbReference>
<dbReference type="PANTHER" id="PTHR30540">
    <property type="entry name" value="OSMOTIC STRESS POTASSIUM TRANSPORTER"/>
    <property type="match status" value="1"/>
</dbReference>
<dbReference type="Pfam" id="PF02705">
    <property type="entry name" value="K_trans"/>
    <property type="match status" value="1"/>
</dbReference>
<dbReference type="Pfam" id="PF22776">
    <property type="entry name" value="K_trans_C"/>
    <property type="match status" value="1"/>
</dbReference>
<reference key="1">
    <citation type="submission" date="2006-01" db="EMBL/GenBank/DDBJ databases">
        <title>Complete sequence of Anaeromyxobacter dehalogenans 2CP-C.</title>
        <authorList>
            <person name="Copeland A."/>
            <person name="Lucas S."/>
            <person name="Lapidus A."/>
            <person name="Barry K."/>
            <person name="Detter J.C."/>
            <person name="Glavina T."/>
            <person name="Hammon N."/>
            <person name="Israni S."/>
            <person name="Pitluck S."/>
            <person name="Brettin T."/>
            <person name="Bruce D."/>
            <person name="Han C."/>
            <person name="Tapia R."/>
            <person name="Gilna P."/>
            <person name="Kiss H."/>
            <person name="Schmutz J."/>
            <person name="Larimer F."/>
            <person name="Land M."/>
            <person name="Kyrpides N."/>
            <person name="Anderson I."/>
            <person name="Sanford R.A."/>
            <person name="Ritalahti K.M."/>
            <person name="Thomas H.S."/>
            <person name="Kirby J.R."/>
            <person name="Zhulin I.B."/>
            <person name="Loeffler F.E."/>
            <person name="Richardson P."/>
        </authorList>
    </citation>
    <scope>NUCLEOTIDE SEQUENCE [LARGE SCALE GENOMIC DNA]</scope>
    <source>
        <strain>2CP-C</strain>
    </source>
</reference>
<proteinExistence type="inferred from homology"/>
<protein>
    <recommendedName>
        <fullName evidence="1">Probable potassium transport system protein Kup</fullName>
    </recommendedName>
</protein>
<sequence>MSQIPSPNDPPPAGAVPTSGAPAGPSATPAPSPTAGFSLPEHRPAPTGKALAALAVGALGVVYGDIGTSPLYSLKECFGGPHGVHPTDANVLGVLSLVFWAMTFVVTFKYMSFVMRADNRGEGGILALMALVGKTETTRLGRRVLLMLGLFGAALLYGDGIITPAISVLGAVEGVAVAAPAMERVVVPATVVILVFLFLFQKQGTAKVGAVFGPIMLVWFATIAVLGVRGILHDPSILRALLPTHALSFFARNGWHGFLVLGGVVLVITGGEALYADMGHFGKRPIRVAWLGLAMPALLLNYLGQGALLLHDPGAARNPFYLLAPEWALYPTIAIATAAAIVASQALISGAYSLTQQAIQLGYSPRVTIRHTSQREIGQIYLPEVNWMLGTACVALVLGFQTSSRLASAYGIAVTGTMIVTTLLFHRVMRDRWGWARWKAWPLTVLFLTVDASFFLANVVKFRDGGWFPIAAAALVFTLMSTWKRGRDALALMLKDAGLPLDLFMADVARRKVQRVAGTAVFMTSNPGGVPPVLLHHLKHNKVLHERVILVSILAHEIPFVAEAERVNARELGSGFFQVIAHYGFMETPDVPALLDSLPRRALAGPRLTIVPMETTYFLGRETLLANGPSTIPTWRKRLFIVMARNAQTASAFFGLPPNRVVEMGAQIQL</sequence>
<gene>
    <name evidence="1" type="primary">kup</name>
    <name type="ordered locus">Adeh_0949</name>
</gene>
<keyword id="KW-0997">Cell inner membrane</keyword>
<keyword id="KW-1003">Cell membrane</keyword>
<keyword id="KW-0406">Ion transport</keyword>
<keyword id="KW-0472">Membrane</keyword>
<keyword id="KW-0630">Potassium</keyword>
<keyword id="KW-0633">Potassium transport</keyword>
<keyword id="KW-1185">Reference proteome</keyword>
<keyword id="KW-0769">Symport</keyword>
<keyword id="KW-0812">Transmembrane</keyword>
<keyword id="KW-1133">Transmembrane helix</keyword>
<keyword id="KW-0813">Transport</keyword>
<comment type="function">
    <text evidence="1">Transport of potassium into the cell. Likely operates as a K(+):H(+) symporter.</text>
</comment>
<comment type="catalytic activity">
    <reaction evidence="1">
        <text>K(+)(in) + H(+)(in) = K(+)(out) + H(+)(out)</text>
        <dbReference type="Rhea" id="RHEA:28490"/>
        <dbReference type="ChEBI" id="CHEBI:15378"/>
        <dbReference type="ChEBI" id="CHEBI:29103"/>
    </reaction>
    <physiologicalReaction direction="right-to-left" evidence="1">
        <dbReference type="Rhea" id="RHEA:28492"/>
    </physiologicalReaction>
</comment>
<comment type="subcellular location">
    <subcellularLocation>
        <location evidence="1">Cell inner membrane</location>
        <topology evidence="1">Multi-pass membrane protein</topology>
    </subcellularLocation>
</comment>
<comment type="similarity">
    <text evidence="1">Belongs to the HAK/KUP transporter (TC 2.A.72) family.</text>
</comment>
<feature type="chain" id="PRO_0000279765" description="Probable potassium transport system protein Kup">
    <location>
        <begin position="1"/>
        <end position="670"/>
    </location>
</feature>
<feature type="transmembrane region" description="Helical" evidence="1">
    <location>
        <begin position="51"/>
        <end position="71"/>
    </location>
</feature>
<feature type="transmembrane region" description="Helical" evidence="1">
    <location>
        <begin position="91"/>
        <end position="111"/>
    </location>
</feature>
<feature type="transmembrane region" description="Helical" evidence="1">
    <location>
        <begin position="144"/>
        <end position="164"/>
    </location>
</feature>
<feature type="transmembrane region" description="Helical" evidence="1">
    <location>
        <begin position="180"/>
        <end position="200"/>
    </location>
</feature>
<feature type="transmembrane region" description="Helical" evidence="1">
    <location>
        <begin position="208"/>
        <end position="228"/>
    </location>
</feature>
<feature type="transmembrane region" description="Helical" evidence="1">
    <location>
        <begin position="254"/>
        <end position="274"/>
    </location>
</feature>
<feature type="transmembrane region" description="Helical" evidence="1">
    <location>
        <begin position="290"/>
        <end position="310"/>
    </location>
</feature>
<feature type="transmembrane region" description="Helical" evidence="1">
    <location>
        <begin position="322"/>
        <end position="342"/>
    </location>
</feature>
<feature type="transmembrane region" description="Helical" evidence="1">
    <location>
        <begin position="380"/>
        <end position="400"/>
    </location>
</feature>
<feature type="transmembrane region" description="Helical" evidence="1">
    <location>
        <begin position="406"/>
        <end position="426"/>
    </location>
</feature>
<feature type="transmembrane region" description="Helical" evidence="1">
    <location>
        <begin position="440"/>
        <end position="460"/>
    </location>
</feature>
<feature type="transmembrane region" description="Helical" evidence="1">
    <location>
        <begin position="464"/>
        <end position="484"/>
    </location>
</feature>
<feature type="region of interest" description="Disordered" evidence="2">
    <location>
        <begin position="1"/>
        <end position="42"/>
    </location>
</feature>
<feature type="compositionally biased region" description="Low complexity" evidence="2">
    <location>
        <begin position="15"/>
        <end position="35"/>
    </location>
</feature>